<feature type="chain" id="PRO_0000303270" description="tRNA N6-adenosine threonylcarbamoyltransferase">
    <location>
        <begin position="1"/>
        <end position="343"/>
    </location>
</feature>
<feature type="binding site" evidence="1">
    <location>
        <position position="120"/>
    </location>
    <ligand>
        <name>Fe cation</name>
        <dbReference type="ChEBI" id="CHEBI:24875"/>
    </ligand>
</feature>
<feature type="binding site" evidence="1">
    <location>
        <position position="124"/>
    </location>
    <ligand>
        <name>Fe cation</name>
        <dbReference type="ChEBI" id="CHEBI:24875"/>
    </ligand>
</feature>
<feature type="binding site" evidence="1">
    <location>
        <begin position="142"/>
        <end position="146"/>
    </location>
    <ligand>
        <name>substrate</name>
    </ligand>
</feature>
<feature type="binding site" evidence="1">
    <location>
        <position position="175"/>
    </location>
    <ligand>
        <name>substrate</name>
    </ligand>
</feature>
<feature type="binding site" evidence="1">
    <location>
        <position position="188"/>
    </location>
    <ligand>
        <name>substrate</name>
    </ligand>
</feature>
<feature type="binding site" evidence="1">
    <location>
        <position position="192"/>
    </location>
    <ligand>
        <name>substrate</name>
    </ligand>
</feature>
<feature type="binding site" evidence="1">
    <location>
        <position position="281"/>
    </location>
    <ligand>
        <name>substrate</name>
    </ligand>
</feature>
<feature type="binding site" evidence="1">
    <location>
        <position position="310"/>
    </location>
    <ligand>
        <name>Fe cation</name>
        <dbReference type="ChEBI" id="CHEBI:24875"/>
    </ligand>
</feature>
<proteinExistence type="inferred from homology"/>
<protein>
    <recommendedName>
        <fullName evidence="1">tRNA N6-adenosine threonylcarbamoyltransferase</fullName>
        <ecNumber evidence="1">2.3.1.234</ecNumber>
    </recommendedName>
    <alternativeName>
        <fullName evidence="1">N6-L-threonylcarbamoyladenine synthase</fullName>
        <shortName evidence="1">t(6)A synthase</shortName>
    </alternativeName>
    <alternativeName>
        <fullName evidence="1">t(6)A37 threonylcarbamoyladenosine biosynthesis protein TsaD</fullName>
    </alternativeName>
    <alternativeName>
        <fullName evidence="1">tRNA threonylcarbamoyladenosine biosynthesis protein TsaD</fullName>
    </alternativeName>
</protein>
<keyword id="KW-0012">Acyltransferase</keyword>
<keyword id="KW-0963">Cytoplasm</keyword>
<keyword id="KW-0408">Iron</keyword>
<keyword id="KW-0479">Metal-binding</keyword>
<keyword id="KW-0808">Transferase</keyword>
<keyword id="KW-0819">tRNA processing</keyword>
<sequence length="343" mass="36553">MGEYIMEKNTIILGIETSCDETAVAVVKNGTEIIANVVASQIESHKRFGGVVPEIASRHHVEEITVVLEEALKEANITFDDIDAIAVTEGPGLVGALLIGVNAAKAVAFAHDIPLVGVHHIAGHIYANRLVKEVQFPLLSLVVSGGHTELVYMKEHGSFEVIGETRDDAAGEAYDKVARTLSMPYPGGPHIDRLAHEGKPTIDLPRAWLEPDSYDFSFSGLKSAVINTVHNAKQRGIEIAPEDLAASFQESVIDVLVTKASRAADAYNVKQVLLAGGVAANKGLRARLEAEFAQKENVELIIPPLSLCTDNAAMIAAAGTIAYEQGKRATLALNANPGLDIES</sequence>
<dbReference type="EC" id="2.3.1.234" evidence="1"/>
<dbReference type="EMBL" id="AE017355">
    <property type="protein sequence ID" value="AAT58954.1"/>
    <property type="molecule type" value="Genomic_DNA"/>
</dbReference>
<dbReference type="RefSeq" id="YP_034587.2">
    <property type="nucleotide sequence ID" value="NC_005957.1"/>
</dbReference>
<dbReference type="SMR" id="Q6HPD3"/>
<dbReference type="KEGG" id="btk:BT9727_0233"/>
<dbReference type="PATRIC" id="fig|281309.8.peg.249"/>
<dbReference type="HOGENOM" id="CLU_023208_0_2_9"/>
<dbReference type="Proteomes" id="UP000001301">
    <property type="component" value="Chromosome"/>
</dbReference>
<dbReference type="GO" id="GO:0005737">
    <property type="term" value="C:cytoplasm"/>
    <property type="evidence" value="ECO:0007669"/>
    <property type="project" value="UniProtKB-SubCell"/>
</dbReference>
<dbReference type="GO" id="GO:0005506">
    <property type="term" value="F:iron ion binding"/>
    <property type="evidence" value="ECO:0007669"/>
    <property type="project" value="UniProtKB-UniRule"/>
</dbReference>
<dbReference type="GO" id="GO:0061711">
    <property type="term" value="F:N(6)-L-threonylcarbamoyladenine synthase activity"/>
    <property type="evidence" value="ECO:0007669"/>
    <property type="project" value="UniProtKB-EC"/>
</dbReference>
<dbReference type="GO" id="GO:0002949">
    <property type="term" value="P:tRNA threonylcarbamoyladenosine modification"/>
    <property type="evidence" value="ECO:0007669"/>
    <property type="project" value="UniProtKB-UniRule"/>
</dbReference>
<dbReference type="CDD" id="cd24133">
    <property type="entry name" value="ASKHA_NBD_TsaD_bac"/>
    <property type="match status" value="1"/>
</dbReference>
<dbReference type="FunFam" id="3.30.420.40:FF:000012">
    <property type="entry name" value="tRNA N6-adenosine threonylcarbamoyltransferase"/>
    <property type="match status" value="1"/>
</dbReference>
<dbReference type="FunFam" id="3.30.420.40:FF:000040">
    <property type="entry name" value="tRNA N6-adenosine threonylcarbamoyltransferase"/>
    <property type="match status" value="1"/>
</dbReference>
<dbReference type="Gene3D" id="3.30.420.40">
    <property type="match status" value="2"/>
</dbReference>
<dbReference type="HAMAP" id="MF_01445">
    <property type="entry name" value="TsaD"/>
    <property type="match status" value="1"/>
</dbReference>
<dbReference type="InterPro" id="IPR043129">
    <property type="entry name" value="ATPase_NBD"/>
</dbReference>
<dbReference type="InterPro" id="IPR000905">
    <property type="entry name" value="Gcp-like_dom"/>
</dbReference>
<dbReference type="InterPro" id="IPR017861">
    <property type="entry name" value="KAE1/TsaD"/>
</dbReference>
<dbReference type="InterPro" id="IPR017860">
    <property type="entry name" value="Peptidase_M22_CS"/>
</dbReference>
<dbReference type="InterPro" id="IPR022450">
    <property type="entry name" value="TsaD"/>
</dbReference>
<dbReference type="NCBIfam" id="TIGR00329">
    <property type="entry name" value="gcp_kae1"/>
    <property type="match status" value="1"/>
</dbReference>
<dbReference type="NCBIfam" id="TIGR03723">
    <property type="entry name" value="T6A_TsaD_YgjD"/>
    <property type="match status" value="1"/>
</dbReference>
<dbReference type="PANTHER" id="PTHR11735">
    <property type="entry name" value="TRNA N6-ADENOSINE THREONYLCARBAMOYLTRANSFERASE"/>
    <property type="match status" value="1"/>
</dbReference>
<dbReference type="PANTHER" id="PTHR11735:SF6">
    <property type="entry name" value="TRNA N6-ADENOSINE THREONYLCARBAMOYLTRANSFERASE, MITOCHONDRIAL"/>
    <property type="match status" value="1"/>
</dbReference>
<dbReference type="Pfam" id="PF00814">
    <property type="entry name" value="TsaD"/>
    <property type="match status" value="1"/>
</dbReference>
<dbReference type="PRINTS" id="PR00789">
    <property type="entry name" value="OSIALOPTASE"/>
</dbReference>
<dbReference type="SUPFAM" id="SSF53067">
    <property type="entry name" value="Actin-like ATPase domain"/>
    <property type="match status" value="2"/>
</dbReference>
<dbReference type="PROSITE" id="PS01016">
    <property type="entry name" value="GLYCOPROTEASE"/>
    <property type="match status" value="1"/>
</dbReference>
<gene>
    <name evidence="1" type="primary">tsaD</name>
    <name type="synonym">gcp</name>
    <name type="ordered locus">BT9727_0233</name>
</gene>
<organism>
    <name type="scientific">Bacillus thuringiensis subsp. konkukian (strain 97-27)</name>
    <dbReference type="NCBI Taxonomy" id="281309"/>
    <lineage>
        <taxon>Bacteria</taxon>
        <taxon>Bacillati</taxon>
        <taxon>Bacillota</taxon>
        <taxon>Bacilli</taxon>
        <taxon>Bacillales</taxon>
        <taxon>Bacillaceae</taxon>
        <taxon>Bacillus</taxon>
        <taxon>Bacillus cereus group</taxon>
    </lineage>
</organism>
<evidence type="ECO:0000255" key="1">
    <source>
        <dbReference type="HAMAP-Rule" id="MF_01445"/>
    </source>
</evidence>
<comment type="function">
    <text evidence="1">Required for the formation of a threonylcarbamoyl group on adenosine at position 37 (t(6)A37) in tRNAs that read codons beginning with adenine. Is involved in the transfer of the threonylcarbamoyl moiety of threonylcarbamoyl-AMP (TC-AMP) to the N6 group of A37, together with TsaE and TsaB. TsaD likely plays a direct catalytic role in this reaction.</text>
</comment>
<comment type="catalytic activity">
    <reaction evidence="1">
        <text>L-threonylcarbamoyladenylate + adenosine(37) in tRNA = N(6)-L-threonylcarbamoyladenosine(37) in tRNA + AMP + H(+)</text>
        <dbReference type="Rhea" id="RHEA:37059"/>
        <dbReference type="Rhea" id="RHEA-COMP:10162"/>
        <dbReference type="Rhea" id="RHEA-COMP:10163"/>
        <dbReference type="ChEBI" id="CHEBI:15378"/>
        <dbReference type="ChEBI" id="CHEBI:73682"/>
        <dbReference type="ChEBI" id="CHEBI:74411"/>
        <dbReference type="ChEBI" id="CHEBI:74418"/>
        <dbReference type="ChEBI" id="CHEBI:456215"/>
        <dbReference type="EC" id="2.3.1.234"/>
    </reaction>
</comment>
<comment type="cofactor">
    <cofactor evidence="1">
        <name>Fe(2+)</name>
        <dbReference type="ChEBI" id="CHEBI:29033"/>
    </cofactor>
    <text evidence="1">Binds 1 Fe(2+) ion per subunit.</text>
</comment>
<comment type="subcellular location">
    <subcellularLocation>
        <location evidence="1">Cytoplasm</location>
    </subcellularLocation>
</comment>
<comment type="similarity">
    <text evidence="1">Belongs to the KAE1 / TsaD family.</text>
</comment>
<accession>Q6HPD3</accession>
<name>TSAD_BACHK</name>
<reference key="1">
    <citation type="journal article" date="2006" name="J. Bacteriol.">
        <title>Pathogenomic sequence analysis of Bacillus cereus and Bacillus thuringiensis isolates closely related to Bacillus anthracis.</title>
        <authorList>
            <person name="Han C.S."/>
            <person name="Xie G."/>
            <person name="Challacombe J.F."/>
            <person name="Altherr M.R."/>
            <person name="Bhotika S.S."/>
            <person name="Bruce D."/>
            <person name="Campbell C.S."/>
            <person name="Campbell M.L."/>
            <person name="Chen J."/>
            <person name="Chertkov O."/>
            <person name="Cleland C."/>
            <person name="Dimitrijevic M."/>
            <person name="Doggett N.A."/>
            <person name="Fawcett J.J."/>
            <person name="Glavina T."/>
            <person name="Goodwin L.A."/>
            <person name="Hill K.K."/>
            <person name="Hitchcock P."/>
            <person name="Jackson P.J."/>
            <person name="Keim P."/>
            <person name="Kewalramani A.R."/>
            <person name="Longmire J."/>
            <person name="Lucas S."/>
            <person name="Malfatti S."/>
            <person name="McMurry K."/>
            <person name="Meincke L.J."/>
            <person name="Misra M."/>
            <person name="Moseman B.L."/>
            <person name="Mundt M."/>
            <person name="Munk A.C."/>
            <person name="Okinaka R.T."/>
            <person name="Parson-Quintana B."/>
            <person name="Reilly L.P."/>
            <person name="Richardson P."/>
            <person name="Robinson D.L."/>
            <person name="Rubin E."/>
            <person name="Saunders E."/>
            <person name="Tapia R."/>
            <person name="Tesmer J.G."/>
            <person name="Thayer N."/>
            <person name="Thompson L.S."/>
            <person name="Tice H."/>
            <person name="Ticknor L.O."/>
            <person name="Wills P.L."/>
            <person name="Brettin T.S."/>
            <person name="Gilna P."/>
        </authorList>
    </citation>
    <scope>NUCLEOTIDE SEQUENCE [LARGE SCALE GENOMIC DNA]</scope>
    <source>
        <strain>97-27</strain>
    </source>
</reference>